<sequence length="294" mass="33440">MKTKIIVIVGPTAVGKTALAIEVAKRFNGEVVSGDSQQVYRGLDIGTAKASPEEQAAVPHHLIDVREITESYSAFDFVSEAKMTIEDIQSRGKLAIIAGGTGLYIQSLLEGYHLGGETPHEEILAYRASLEPYSDEELAHLVEQAGLEIPQFNRRRAMRALEIAHFGQDLENQEILYEPLIICLDDERSQLYERINHRVDLMFEAGLLDEAKWLFDHSPNVQAAKGIGYKELFPYFRGEQTFEEARESLKQATRRFAKRQLTWFRNRMQVTFYQIGESGVQDRILSQIEEFLDD</sequence>
<protein>
    <recommendedName>
        <fullName evidence="1">tRNA dimethylallyltransferase</fullName>
        <ecNumber evidence="1">2.5.1.75</ecNumber>
    </recommendedName>
    <alternativeName>
        <fullName evidence="1">Dimethylallyl diphosphate:tRNA dimethylallyltransferase</fullName>
        <shortName evidence="1">DMAPP:tRNA dimethylallyltransferase</shortName>
        <shortName evidence="1">DMATase</shortName>
    </alternativeName>
    <alternativeName>
        <fullName evidence="1">Isopentenyl-diphosphate:tRNA isopentenyltransferase</fullName>
        <shortName evidence="1">IPP transferase</shortName>
        <shortName evidence="1">IPPT</shortName>
        <shortName evidence="1">IPTase</shortName>
    </alternativeName>
</protein>
<accession>B8ZMQ3</accession>
<reference key="1">
    <citation type="journal article" date="2009" name="J. Bacteriol.">
        <title>Role of conjugative elements in the evolution of the multidrug-resistant pandemic clone Streptococcus pneumoniae Spain23F ST81.</title>
        <authorList>
            <person name="Croucher N.J."/>
            <person name="Walker D."/>
            <person name="Romero P."/>
            <person name="Lennard N."/>
            <person name="Paterson G.K."/>
            <person name="Bason N.C."/>
            <person name="Mitchell A.M."/>
            <person name="Quail M.A."/>
            <person name="Andrew P.W."/>
            <person name="Parkhill J."/>
            <person name="Bentley S.D."/>
            <person name="Mitchell T.J."/>
        </authorList>
    </citation>
    <scope>NUCLEOTIDE SEQUENCE [LARGE SCALE GENOMIC DNA]</scope>
    <source>
        <strain>ATCC 700669 / Spain 23F-1</strain>
    </source>
</reference>
<evidence type="ECO:0000255" key="1">
    <source>
        <dbReference type="HAMAP-Rule" id="MF_00185"/>
    </source>
</evidence>
<proteinExistence type="inferred from homology"/>
<comment type="function">
    <text evidence="1">Catalyzes the transfer of a dimethylallyl group onto the adenine at position 37 in tRNAs that read codons beginning with uridine, leading to the formation of N6-(dimethylallyl)adenosine (i(6)A).</text>
</comment>
<comment type="catalytic activity">
    <reaction evidence="1">
        <text>adenosine(37) in tRNA + dimethylallyl diphosphate = N(6)-dimethylallyladenosine(37) in tRNA + diphosphate</text>
        <dbReference type="Rhea" id="RHEA:26482"/>
        <dbReference type="Rhea" id="RHEA-COMP:10162"/>
        <dbReference type="Rhea" id="RHEA-COMP:10375"/>
        <dbReference type="ChEBI" id="CHEBI:33019"/>
        <dbReference type="ChEBI" id="CHEBI:57623"/>
        <dbReference type="ChEBI" id="CHEBI:74411"/>
        <dbReference type="ChEBI" id="CHEBI:74415"/>
        <dbReference type="EC" id="2.5.1.75"/>
    </reaction>
</comment>
<comment type="cofactor">
    <cofactor evidence="1">
        <name>Mg(2+)</name>
        <dbReference type="ChEBI" id="CHEBI:18420"/>
    </cofactor>
</comment>
<comment type="subunit">
    <text evidence="1">Monomer.</text>
</comment>
<comment type="similarity">
    <text evidence="1">Belongs to the IPP transferase family.</text>
</comment>
<gene>
    <name evidence="1" type="primary">miaA</name>
    <name type="ordered locus">SPN23F06070</name>
</gene>
<organism>
    <name type="scientific">Streptococcus pneumoniae (strain ATCC 700669 / Spain 23F-1)</name>
    <dbReference type="NCBI Taxonomy" id="561276"/>
    <lineage>
        <taxon>Bacteria</taxon>
        <taxon>Bacillati</taxon>
        <taxon>Bacillota</taxon>
        <taxon>Bacilli</taxon>
        <taxon>Lactobacillales</taxon>
        <taxon>Streptococcaceae</taxon>
        <taxon>Streptococcus</taxon>
    </lineage>
</organism>
<dbReference type="EC" id="2.5.1.75" evidence="1"/>
<dbReference type="EMBL" id="FM211187">
    <property type="protein sequence ID" value="CAR68456.1"/>
    <property type="molecule type" value="Genomic_DNA"/>
</dbReference>
<dbReference type="RefSeq" id="WP_000850189.1">
    <property type="nucleotide sequence ID" value="NC_011900.1"/>
</dbReference>
<dbReference type="SMR" id="B8ZMQ3"/>
<dbReference type="KEGG" id="sne:SPN23F06070"/>
<dbReference type="HOGENOM" id="CLU_032616_0_1_9"/>
<dbReference type="GO" id="GO:0005524">
    <property type="term" value="F:ATP binding"/>
    <property type="evidence" value="ECO:0007669"/>
    <property type="project" value="UniProtKB-UniRule"/>
</dbReference>
<dbReference type="GO" id="GO:0052381">
    <property type="term" value="F:tRNA dimethylallyltransferase activity"/>
    <property type="evidence" value="ECO:0007669"/>
    <property type="project" value="UniProtKB-UniRule"/>
</dbReference>
<dbReference type="GO" id="GO:0006400">
    <property type="term" value="P:tRNA modification"/>
    <property type="evidence" value="ECO:0007669"/>
    <property type="project" value="TreeGrafter"/>
</dbReference>
<dbReference type="Gene3D" id="3.40.50.300">
    <property type="entry name" value="P-loop containing nucleotide triphosphate hydrolases"/>
    <property type="match status" value="1"/>
</dbReference>
<dbReference type="HAMAP" id="MF_00185">
    <property type="entry name" value="IPP_trans"/>
    <property type="match status" value="1"/>
</dbReference>
<dbReference type="InterPro" id="IPR039657">
    <property type="entry name" value="Dimethylallyltransferase"/>
</dbReference>
<dbReference type="InterPro" id="IPR018022">
    <property type="entry name" value="IPT"/>
</dbReference>
<dbReference type="InterPro" id="IPR027417">
    <property type="entry name" value="P-loop_NTPase"/>
</dbReference>
<dbReference type="NCBIfam" id="TIGR00174">
    <property type="entry name" value="miaA"/>
    <property type="match status" value="1"/>
</dbReference>
<dbReference type="PANTHER" id="PTHR11088">
    <property type="entry name" value="TRNA DIMETHYLALLYLTRANSFERASE"/>
    <property type="match status" value="1"/>
</dbReference>
<dbReference type="PANTHER" id="PTHR11088:SF60">
    <property type="entry name" value="TRNA DIMETHYLALLYLTRANSFERASE"/>
    <property type="match status" value="1"/>
</dbReference>
<dbReference type="Pfam" id="PF01715">
    <property type="entry name" value="IPPT"/>
    <property type="match status" value="1"/>
</dbReference>
<dbReference type="SUPFAM" id="SSF52540">
    <property type="entry name" value="P-loop containing nucleoside triphosphate hydrolases"/>
    <property type="match status" value="2"/>
</dbReference>
<name>MIAA_STRPJ</name>
<keyword id="KW-0067">ATP-binding</keyword>
<keyword id="KW-0460">Magnesium</keyword>
<keyword id="KW-0547">Nucleotide-binding</keyword>
<keyword id="KW-0808">Transferase</keyword>
<keyword id="KW-0819">tRNA processing</keyword>
<feature type="chain" id="PRO_0000377335" description="tRNA dimethylallyltransferase">
    <location>
        <begin position="1"/>
        <end position="294"/>
    </location>
</feature>
<feature type="region of interest" description="Interaction with substrate tRNA" evidence="1">
    <location>
        <begin position="35"/>
        <end position="38"/>
    </location>
</feature>
<feature type="binding site" evidence="1">
    <location>
        <begin position="10"/>
        <end position="17"/>
    </location>
    <ligand>
        <name>ATP</name>
        <dbReference type="ChEBI" id="CHEBI:30616"/>
    </ligand>
</feature>
<feature type="binding site" evidence="1">
    <location>
        <begin position="12"/>
        <end position="17"/>
    </location>
    <ligand>
        <name>substrate</name>
    </ligand>
</feature>
<feature type="site" description="Interaction with substrate tRNA" evidence="1">
    <location>
        <position position="101"/>
    </location>
</feature>
<feature type="site" description="Interaction with substrate tRNA" evidence="1">
    <location>
        <position position="127"/>
    </location>
</feature>